<reference key="1">
    <citation type="journal article" date="2003" name="Proc. Natl. Acad. Sci. U.S.A.">
        <title>The genome sequence of Clostridium tetani, the causative agent of tetanus disease.</title>
        <authorList>
            <person name="Brueggemann H."/>
            <person name="Baeumer S."/>
            <person name="Fricke W.F."/>
            <person name="Wiezer A."/>
            <person name="Liesegang H."/>
            <person name="Decker I."/>
            <person name="Herzberg C."/>
            <person name="Martinez-Arias R."/>
            <person name="Merkl R."/>
            <person name="Henne A."/>
            <person name="Gottschalk G."/>
        </authorList>
    </citation>
    <scope>NUCLEOTIDE SEQUENCE [LARGE SCALE GENOMIC DNA]</scope>
    <source>
        <strain>Massachusetts / E88</strain>
    </source>
</reference>
<organism>
    <name type="scientific">Clostridium tetani (strain Massachusetts / E88)</name>
    <dbReference type="NCBI Taxonomy" id="212717"/>
    <lineage>
        <taxon>Bacteria</taxon>
        <taxon>Bacillati</taxon>
        <taxon>Bacillota</taxon>
        <taxon>Clostridia</taxon>
        <taxon>Eubacteriales</taxon>
        <taxon>Clostridiaceae</taxon>
        <taxon>Clostridium</taxon>
    </lineage>
</organism>
<keyword id="KW-1185">Reference proteome</keyword>
<gene>
    <name type="ordered locus">CTC_01059</name>
</gene>
<comment type="similarity">
    <text evidence="1">Belongs to the UPF0342 family.</text>
</comment>
<dbReference type="EMBL" id="AE015927">
    <property type="protein sequence ID" value="AAO35642.1"/>
    <property type="molecule type" value="Genomic_DNA"/>
</dbReference>
<dbReference type="RefSeq" id="WP_011099304.1">
    <property type="nucleotide sequence ID" value="NC_004557.1"/>
</dbReference>
<dbReference type="SMR" id="Q896E8"/>
<dbReference type="STRING" id="212717.CTC_01059"/>
<dbReference type="GeneID" id="24253737"/>
<dbReference type="KEGG" id="ctc:CTC_01059"/>
<dbReference type="HOGENOM" id="CLU_140243_2_0_9"/>
<dbReference type="OrthoDB" id="9811402at2"/>
<dbReference type="Proteomes" id="UP000001412">
    <property type="component" value="Chromosome"/>
</dbReference>
<dbReference type="Gene3D" id="1.20.1500.10">
    <property type="entry name" value="YheA/YmcA-like"/>
    <property type="match status" value="1"/>
</dbReference>
<dbReference type="HAMAP" id="MF_01526">
    <property type="entry name" value="UPF0342"/>
    <property type="match status" value="1"/>
</dbReference>
<dbReference type="InterPro" id="IPR010368">
    <property type="entry name" value="Com_YlbF"/>
</dbReference>
<dbReference type="InterPro" id="IPR023378">
    <property type="entry name" value="YheA/YmcA-like_dom_sf"/>
</dbReference>
<dbReference type="Pfam" id="PF06133">
    <property type="entry name" value="Com_YlbF"/>
    <property type="match status" value="1"/>
</dbReference>
<dbReference type="SUPFAM" id="SSF158622">
    <property type="entry name" value="YheA/YmcA-like"/>
    <property type="match status" value="1"/>
</dbReference>
<accession>Q896E8</accession>
<sequence>MNLYDKAHELARVLKDCPEVVELRNTSVKMKENEDNLKMLKDFRQLQYEAYYEQLNNEKISEETETKLNKLGSIIAMNKTVSNYLEAESRFAVIWEDLIKILNEAVDVDLSFESKK</sequence>
<evidence type="ECO:0000255" key="1">
    <source>
        <dbReference type="HAMAP-Rule" id="MF_01526"/>
    </source>
</evidence>
<feature type="chain" id="PRO_0000109973" description="UPF0342 protein CTC_01059">
    <location>
        <begin position="1"/>
        <end position="116"/>
    </location>
</feature>
<proteinExistence type="inferred from homology"/>
<name>Y1059_CLOTE</name>
<protein>
    <recommendedName>
        <fullName evidence="1">UPF0342 protein CTC_01059</fullName>
    </recommendedName>
</protein>